<name>HEM3_YERP3</name>
<sequence length="313" mass="34335">MLDKIIRIATRQSPLALWQAHYVQHLLQANHPGLQIELVPMVTRGDIILDTPLAKVGGKGLFVKELELALLDGRADIAVHSMKDVPIAFPEGLGLVTICEREDPRDAFVSSHYAHLDDLPAGSVVGTSSLRRQCQLRERRPDLIIRDLRGNVGTRLAKLDNGDYQAIILAVAGLKRLGLENRIRYAMSAEESLPAVGQGAVGIECRLDDDHTRQLLAPLNHRHTELRVCAERAMNIRLEGGCQVPIGSYAELEGDTLWLRALVGAPDGSQMIRGERRGPAAEAEQMGIELADELLSRGAREILAAVYLDNPAR</sequence>
<reference key="1">
    <citation type="journal article" date="2007" name="PLoS Genet.">
        <title>The complete genome sequence of Yersinia pseudotuberculosis IP31758, the causative agent of Far East scarlet-like fever.</title>
        <authorList>
            <person name="Eppinger M."/>
            <person name="Rosovitz M.J."/>
            <person name="Fricke W.F."/>
            <person name="Rasko D.A."/>
            <person name="Kokorina G."/>
            <person name="Fayolle C."/>
            <person name="Lindler L.E."/>
            <person name="Carniel E."/>
            <person name="Ravel J."/>
        </authorList>
    </citation>
    <scope>NUCLEOTIDE SEQUENCE [LARGE SCALE GENOMIC DNA]</scope>
    <source>
        <strain>IP 31758</strain>
    </source>
</reference>
<evidence type="ECO:0000255" key="1">
    <source>
        <dbReference type="HAMAP-Rule" id="MF_00260"/>
    </source>
</evidence>
<protein>
    <recommendedName>
        <fullName evidence="1">Porphobilinogen deaminase</fullName>
        <shortName evidence="1">PBG</shortName>
        <ecNumber evidence="1">2.5.1.61</ecNumber>
    </recommendedName>
    <alternativeName>
        <fullName evidence="1">Hydroxymethylbilane synthase</fullName>
        <shortName evidence="1">HMBS</shortName>
    </alternativeName>
    <alternativeName>
        <fullName evidence="1">Pre-uroporphyrinogen synthase</fullName>
    </alternativeName>
</protein>
<dbReference type="EC" id="2.5.1.61" evidence="1"/>
<dbReference type="EMBL" id="CP000720">
    <property type="protein sequence ID" value="ABS48947.1"/>
    <property type="molecule type" value="Genomic_DNA"/>
</dbReference>
<dbReference type="RefSeq" id="WP_002211465.1">
    <property type="nucleotide sequence ID" value="NC_009708.1"/>
</dbReference>
<dbReference type="SMR" id="A7FD67"/>
<dbReference type="GeneID" id="57974860"/>
<dbReference type="KEGG" id="ypi:YpsIP31758_0198"/>
<dbReference type="HOGENOM" id="CLU_019704_0_2_6"/>
<dbReference type="UniPathway" id="UPA00251">
    <property type="reaction ID" value="UER00319"/>
</dbReference>
<dbReference type="Proteomes" id="UP000002412">
    <property type="component" value="Chromosome"/>
</dbReference>
<dbReference type="GO" id="GO:0005737">
    <property type="term" value="C:cytoplasm"/>
    <property type="evidence" value="ECO:0007669"/>
    <property type="project" value="TreeGrafter"/>
</dbReference>
<dbReference type="GO" id="GO:0004418">
    <property type="term" value="F:hydroxymethylbilane synthase activity"/>
    <property type="evidence" value="ECO:0007669"/>
    <property type="project" value="UniProtKB-UniRule"/>
</dbReference>
<dbReference type="GO" id="GO:0006782">
    <property type="term" value="P:protoporphyrinogen IX biosynthetic process"/>
    <property type="evidence" value="ECO:0007669"/>
    <property type="project" value="UniProtKB-UniRule"/>
</dbReference>
<dbReference type="CDD" id="cd13646">
    <property type="entry name" value="PBP2_EcHMBS_like"/>
    <property type="match status" value="1"/>
</dbReference>
<dbReference type="FunFam" id="3.30.160.40:FF:000002">
    <property type="entry name" value="Porphobilinogen deaminase"/>
    <property type="match status" value="1"/>
</dbReference>
<dbReference type="FunFam" id="3.40.190.10:FF:000004">
    <property type="entry name" value="Porphobilinogen deaminase"/>
    <property type="match status" value="1"/>
</dbReference>
<dbReference type="FunFam" id="3.40.190.10:FF:000005">
    <property type="entry name" value="Porphobilinogen deaminase"/>
    <property type="match status" value="1"/>
</dbReference>
<dbReference type="Gene3D" id="3.40.190.10">
    <property type="entry name" value="Periplasmic binding protein-like II"/>
    <property type="match status" value="2"/>
</dbReference>
<dbReference type="Gene3D" id="3.30.160.40">
    <property type="entry name" value="Porphobilinogen deaminase, C-terminal domain"/>
    <property type="match status" value="1"/>
</dbReference>
<dbReference type="HAMAP" id="MF_00260">
    <property type="entry name" value="Porphobil_deam"/>
    <property type="match status" value="1"/>
</dbReference>
<dbReference type="InterPro" id="IPR000860">
    <property type="entry name" value="HemC"/>
</dbReference>
<dbReference type="InterPro" id="IPR022419">
    <property type="entry name" value="Porphobilin_deaminase_cofac_BS"/>
</dbReference>
<dbReference type="InterPro" id="IPR022417">
    <property type="entry name" value="Porphobilin_deaminase_N"/>
</dbReference>
<dbReference type="InterPro" id="IPR022418">
    <property type="entry name" value="Porphobilinogen_deaminase_C"/>
</dbReference>
<dbReference type="InterPro" id="IPR036803">
    <property type="entry name" value="Porphobilinogen_deaminase_C_sf"/>
</dbReference>
<dbReference type="NCBIfam" id="TIGR00212">
    <property type="entry name" value="hemC"/>
    <property type="match status" value="1"/>
</dbReference>
<dbReference type="PANTHER" id="PTHR11557">
    <property type="entry name" value="PORPHOBILINOGEN DEAMINASE"/>
    <property type="match status" value="1"/>
</dbReference>
<dbReference type="PANTHER" id="PTHR11557:SF0">
    <property type="entry name" value="PORPHOBILINOGEN DEAMINASE"/>
    <property type="match status" value="1"/>
</dbReference>
<dbReference type="Pfam" id="PF01379">
    <property type="entry name" value="Porphobil_deam"/>
    <property type="match status" value="1"/>
</dbReference>
<dbReference type="Pfam" id="PF03900">
    <property type="entry name" value="Porphobil_deamC"/>
    <property type="match status" value="1"/>
</dbReference>
<dbReference type="PIRSF" id="PIRSF001438">
    <property type="entry name" value="4pyrrol_synth_OHMeBilane_synth"/>
    <property type="match status" value="1"/>
</dbReference>
<dbReference type="PRINTS" id="PR00151">
    <property type="entry name" value="PORPHBDMNASE"/>
</dbReference>
<dbReference type="SUPFAM" id="SSF53850">
    <property type="entry name" value="Periplasmic binding protein-like II"/>
    <property type="match status" value="1"/>
</dbReference>
<dbReference type="SUPFAM" id="SSF54782">
    <property type="entry name" value="Porphobilinogen deaminase (hydroxymethylbilane synthase), C-terminal domain"/>
    <property type="match status" value="1"/>
</dbReference>
<dbReference type="PROSITE" id="PS00533">
    <property type="entry name" value="PORPHOBILINOGEN_DEAM"/>
    <property type="match status" value="1"/>
</dbReference>
<accession>A7FD67</accession>
<organism>
    <name type="scientific">Yersinia pseudotuberculosis serotype O:1b (strain IP 31758)</name>
    <dbReference type="NCBI Taxonomy" id="349747"/>
    <lineage>
        <taxon>Bacteria</taxon>
        <taxon>Pseudomonadati</taxon>
        <taxon>Pseudomonadota</taxon>
        <taxon>Gammaproteobacteria</taxon>
        <taxon>Enterobacterales</taxon>
        <taxon>Yersiniaceae</taxon>
        <taxon>Yersinia</taxon>
    </lineage>
</organism>
<comment type="function">
    <text evidence="1">Tetrapolymerization of the monopyrrole PBG into the hydroxymethylbilane pre-uroporphyrinogen in several discrete steps.</text>
</comment>
<comment type="catalytic activity">
    <reaction evidence="1">
        <text>4 porphobilinogen + H2O = hydroxymethylbilane + 4 NH4(+)</text>
        <dbReference type="Rhea" id="RHEA:13185"/>
        <dbReference type="ChEBI" id="CHEBI:15377"/>
        <dbReference type="ChEBI" id="CHEBI:28938"/>
        <dbReference type="ChEBI" id="CHEBI:57845"/>
        <dbReference type="ChEBI" id="CHEBI:58126"/>
        <dbReference type="EC" id="2.5.1.61"/>
    </reaction>
</comment>
<comment type="cofactor">
    <cofactor evidence="1">
        <name>dipyrromethane</name>
        <dbReference type="ChEBI" id="CHEBI:60342"/>
    </cofactor>
    <text evidence="1">Binds 1 dipyrromethane group covalently.</text>
</comment>
<comment type="pathway">
    <text evidence="1">Porphyrin-containing compound metabolism; protoporphyrin-IX biosynthesis; coproporphyrinogen-III from 5-aminolevulinate: step 2/4.</text>
</comment>
<comment type="subunit">
    <text evidence="1">Monomer.</text>
</comment>
<comment type="miscellaneous">
    <text evidence="1">The porphobilinogen subunits are added to the dipyrromethane group.</text>
</comment>
<comment type="similarity">
    <text evidence="1">Belongs to the HMBS family.</text>
</comment>
<feature type="chain" id="PRO_1000059107" description="Porphobilinogen deaminase">
    <location>
        <begin position="1"/>
        <end position="313"/>
    </location>
</feature>
<feature type="modified residue" description="S-(dipyrrolylmethanemethyl)cysteine" evidence="1">
    <location>
        <position position="242"/>
    </location>
</feature>
<proteinExistence type="inferred from homology"/>
<keyword id="KW-0627">Porphyrin biosynthesis</keyword>
<keyword id="KW-0808">Transferase</keyword>
<gene>
    <name evidence="1" type="primary">hemC</name>
    <name type="ordered locus">YpsIP31758_0198</name>
</gene>